<comment type="function">
    <text evidence="1">One of the proteins required for the normal export of preproteins out of the cell cytoplasm. It is a molecular chaperone that binds to a subset of precursor proteins, maintaining them in a translocation-competent state. It also specifically binds to its receptor SecA.</text>
</comment>
<comment type="subunit">
    <text evidence="1">Homotetramer, a dimer of dimers. One homotetramer interacts with 1 SecA dimer.</text>
</comment>
<comment type="subcellular location">
    <subcellularLocation>
        <location evidence="1">Cytoplasm</location>
    </subcellularLocation>
</comment>
<comment type="similarity">
    <text evidence="1">Belongs to the SecB family.</text>
</comment>
<keyword id="KW-0143">Chaperone</keyword>
<keyword id="KW-0963">Cytoplasm</keyword>
<keyword id="KW-0653">Protein transport</keyword>
<keyword id="KW-0811">Translocation</keyword>
<keyword id="KW-0813">Transport</keyword>
<accession>Q0HP89</accession>
<evidence type="ECO:0000255" key="1">
    <source>
        <dbReference type="HAMAP-Rule" id="MF_00821"/>
    </source>
</evidence>
<gene>
    <name evidence="1" type="primary">secB</name>
    <name type="ordered locus">Shewmr4_0047</name>
</gene>
<feature type="chain" id="PRO_1000062524" description="Protein-export protein SecB">
    <location>
        <begin position="1"/>
        <end position="161"/>
    </location>
</feature>
<proteinExistence type="inferred from homology"/>
<reference key="1">
    <citation type="submission" date="2006-08" db="EMBL/GenBank/DDBJ databases">
        <title>Complete sequence of Shewanella sp. MR-4.</title>
        <authorList>
            <consortium name="US DOE Joint Genome Institute"/>
            <person name="Copeland A."/>
            <person name="Lucas S."/>
            <person name="Lapidus A."/>
            <person name="Barry K."/>
            <person name="Detter J.C."/>
            <person name="Glavina del Rio T."/>
            <person name="Hammon N."/>
            <person name="Israni S."/>
            <person name="Dalin E."/>
            <person name="Tice H."/>
            <person name="Pitluck S."/>
            <person name="Kiss H."/>
            <person name="Brettin T."/>
            <person name="Bruce D."/>
            <person name="Han C."/>
            <person name="Tapia R."/>
            <person name="Gilna P."/>
            <person name="Schmutz J."/>
            <person name="Larimer F."/>
            <person name="Land M."/>
            <person name="Hauser L."/>
            <person name="Kyrpides N."/>
            <person name="Mikhailova N."/>
            <person name="Nealson K."/>
            <person name="Konstantinidis K."/>
            <person name="Klappenbach J."/>
            <person name="Tiedje J."/>
            <person name="Richardson P."/>
        </authorList>
    </citation>
    <scope>NUCLEOTIDE SEQUENCE [LARGE SCALE GENOMIC DNA]</scope>
    <source>
        <strain>MR-4</strain>
    </source>
</reference>
<name>SECB_SHESM</name>
<organism>
    <name type="scientific">Shewanella sp. (strain MR-4)</name>
    <dbReference type="NCBI Taxonomy" id="60480"/>
    <lineage>
        <taxon>Bacteria</taxon>
        <taxon>Pseudomonadati</taxon>
        <taxon>Pseudomonadota</taxon>
        <taxon>Gammaproteobacteria</taxon>
        <taxon>Alteromonadales</taxon>
        <taxon>Shewanellaceae</taxon>
        <taxon>Shewanella</taxon>
    </lineage>
</organism>
<dbReference type="EMBL" id="CP000446">
    <property type="protein sequence ID" value="ABI37128.1"/>
    <property type="molecule type" value="Genomic_DNA"/>
</dbReference>
<dbReference type="RefSeq" id="WP_011620882.1">
    <property type="nucleotide sequence ID" value="NC_008321.1"/>
</dbReference>
<dbReference type="SMR" id="Q0HP89"/>
<dbReference type="GeneID" id="75186543"/>
<dbReference type="KEGG" id="she:Shewmr4_0047"/>
<dbReference type="HOGENOM" id="CLU_111574_1_0_6"/>
<dbReference type="GO" id="GO:0005737">
    <property type="term" value="C:cytoplasm"/>
    <property type="evidence" value="ECO:0007669"/>
    <property type="project" value="UniProtKB-SubCell"/>
</dbReference>
<dbReference type="GO" id="GO:0051082">
    <property type="term" value="F:unfolded protein binding"/>
    <property type="evidence" value="ECO:0007669"/>
    <property type="project" value="InterPro"/>
</dbReference>
<dbReference type="GO" id="GO:0006457">
    <property type="term" value="P:protein folding"/>
    <property type="evidence" value="ECO:0007669"/>
    <property type="project" value="UniProtKB-UniRule"/>
</dbReference>
<dbReference type="GO" id="GO:0051262">
    <property type="term" value="P:protein tetramerization"/>
    <property type="evidence" value="ECO:0007669"/>
    <property type="project" value="InterPro"/>
</dbReference>
<dbReference type="GO" id="GO:0015031">
    <property type="term" value="P:protein transport"/>
    <property type="evidence" value="ECO:0007669"/>
    <property type="project" value="UniProtKB-UniRule"/>
</dbReference>
<dbReference type="Gene3D" id="3.10.420.10">
    <property type="entry name" value="SecB-like"/>
    <property type="match status" value="1"/>
</dbReference>
<dbReference type="HAMAP" id="MF_00821">
    <property type="entry name" value="SecB"/>
    <property type="match status" value="1"/>
</dbReference>
<dbReference type="InterPro" id="IPR003708">
    <property type="entry name" value="SecB"/>
</dbReference>
<dbReference type="InterPro" id="IPR035958">
    <property type="entry name" value="SecB-like_sf"/>
</dbReference>
<dbReference type="NCBIfam" id="NF004393">
    <property type="entry name" value="PRK05751.1-4"/>
    <property type="match status" value="1"/>
</dbReference>
<dbReference type="NCBIfam" id="TIGR00809">
    <property type="entry name" value="secB"/>
    <property type="match status" value="1"/>
</dbReference>
<dbReference type="PANTHER" id="PTHR36918">
    <property type="match status" value="1"/>
</dbReference>
<dbReference type="PANTHER" id="PTHR36918:SF1">
    <property type="entry name" value="PROTEIN-EXPORT PROTEIN SECB"/>
    <property type="match status" value="1"/>
</dbReference>
<dbReference type="Pfam" id="PF02556">
    <property type="entry name" value="SecB"/>
    <property type="match status" value="1"/>
</dbReference>
<dbReference type="PRINTS" id="PR01594">
    <property type="entry name" value="SECBCHAPRONE"/>
</dbReference>
<dbReference type="SUPFAM" id="SSF54611">
    <property type="entry name" value="SecB-like"/>
    <property type="match status" value="1"/>
</dbReference>
<sequence>MAEVANNEQQAPQFNIQRVYTKDVSFETPNSPAVFQKEWNPEVKLDLDTRSAKLADDVYEVVLSLTVTAQNAGETAFLCEVQQAGIFSIAGLTEPQLAHSLGAYCPNILFPYAREAVGSLVGRGTFPQLNLAPVNFDALFAQYVQQRQAAAAAPAAEEANA</sequence>
<protein>
    <recommendedName>
        <fullName evidence="1">Protein-export protein SecB</fullName>
    </recommendedName>
</protein>